<reference key="1">
    <citation type="submission" date="2007-04" db="EMBL/GenBank/DDBJ databases">
        <title>Complete sequence of Pyrobaculum arsenaticum DSM 13514.</title>
        <authorList>
            <consortium name="US DOE Joint Genome Institute"/>
            <person name="Copeland A."/>
            <person name="Lucas S."/>
            <person name="Lapidus A."/>
            <person name="Barry K."/>
            <person name="Glavina del Rio T."/>
            <person name="Dalin E."/>
            <person name="Tice H."/>
            <person name="Pitluck S."/>
            <person name="Chain P."/>
            <person name="Malfatti S."/>
            <person name="Shin M."/>
            <person name="Vergez L."/>
            <person name="Schmutz J."/>
            <person name="Larimer F."/>
            <person name="Land M."/>
            <person name="Hauser L."/>
            <person name="Kyrpides N."/>
            <person name="Mikhailova N."/>
            <person name="Cozen A.E."/>
            <person name="Fitz-Gibbon S.T."/>
            <person name="House C.H."/>
            <person name="Saltikov C."/>
            <person name="Lowe T.M."/>
            <person name="Richardson P."/>
        </authorList>
    </citation>
    <scope>NUCLEOTIDE SEQUENCE [LARGE SCALE GENOMIC DNA]</scope>
    <source>
        <strain>ATCC 700994 / DSM 13514 / JCM 11321 / PZ6</strain>
    </source>
</reference>
<name>DNLI_PYRAR</name>
<accession>A4WH24</accession>
<feature type="chain" id="PRO_1000049875" description="DNA ligase">
    <location>
        <begin position="1"/>
        <end position="584"/>
    </location>
</feature>
<feature type="active site" description="N6-AMP-lysine intermediate" evidence="1">
    <location>
        <position position="251"/>
    </location>
</feature>
<feature type="binding site" evidence="1">
    <location>
        <position position="249"/>
    </location>
    <ligand>
        <name>ATP</name>
        <dbReference type="ChEBI" id="CHEBI:30616"/>
    </ligand>
</feature>
<feature type="binding site" evidence="1">
    <location>
        <position position="256"/>
    </location>
    <ligand>
        <name>ATP</name>
        <dbReference type="ChEBI" id="CHEBI:30616"/>
    </ligand>
</feature>
<feature type="binding site" evidence="1">
    <location>
        <position position="271"/>
    </location>
    <ligand>
        <name>ATP</name>
        <dbReference type="ChEBI" id="CHEBI:30616"/>
    </ligand>
</feature>
<feature type="binding site" evidence="1">
    <location>
        <position position="301"/>
    </location>
    <ligand>
        <name>ATP</name>
        <dbReference type="ChEBI" id="CHEBI:30616"/>
    </ligand>
</feature>
<feature type="binding site" evidence="1">
    <location>
        <position position="341"/>
    </location>
    <ligand>
        <name>ATP</name>
        <dbReference type="ChEBI" id="CHEBI:30616"/>
    </ligand>
</feature>
<feature type="binding site" evidence="1">
    <location>
        <position position="416"/>
    </location>
    <ligand>
        <name>ATP</name>
        <dbReference type="ChEBI" id="CHEBI:30616"/>
    </ligand>
</feature>
<feature type="binding site" evidence="1">
    <location>
        <position position="422"/>
    </location>
    <ligand>
        <name>ATP</name>
        <dbReference type="ChEBI" id="CHEBI:30616"/>
    </ligand>
</feature>
<gene>
    <name evidence="1" type="primary">lig</name>
    <name type="ordered locus">Pars_0076</name>
</gene>
<dbReference type="EC" id="6.5.1.1" evidence="1"/>
<dbReference type="EMBL" id="CP000660">
    <property type="protein sequence ID" value="ABP49691.1"/>
    <property type="molecule type" value="Genomic_DNA"/>
</dbReference>
<dbReference type="SMR" id="A4WH24"/>
<dbReference type="STRING" id="340102.Pars_0076"/>
<dbReference type="KEGG" id="pas:Pars_0076"/>
<dbReference type="HOGENOM" id="CLU_005138_6_0_2"/>
<dbReference type="OrthoDB" id="31274at2157"/>
<dbReference type="PhylomeDB" id="A4WH24"/>
<dbReference type="Proteomes" id="UP000001567">
    <property type="component" value="Chromosome"/>
</dbReference>
<dbReference type="GO" id="GO:0005524">
    <property type="term" value="F:ATP binding"/>
    <property type="evidence" value="ECO:0007669"/>
    <property type="project" value="UniProtKB-UniRule"/>
</dbReference>
<dbReference type="GO" id="GO:0003677">
    <property type="term" value="F:DNA binding"/>
    <property type="evidence" value="ECO:0007669"/>
    <property type="project" value="InterPro"/>
</dbReference>
<dbReference type="GO" id="GO:0003910">
    <property type="term" value="F:DNA ligase (ATP) activity"/>
    <property type="evidence" value="ECO:0007669"/>
    <property type="project" value="UniProtKB-UniRule"/>
</dbReference>
<dbReference type="GO" id="GO:0046872">
    <property type="term" value="F:metal ion binding"/>
    <property type="evidence" value="ECO:0007669"/>
    <property type="project" value="UniProtKB-KW"/>
</dbReference>
<dbReference type="GO" id="GO:0051301">
    <property type="term" value="P:cell division"/>
    <property type="evidence" value="ECO:0007669"/>
    <property type="project" value="UniProtKB-KW"/>
</dbReference>
<dbReference type="GO" id="GO:0071897">
    <property type="term" value="P:DNA biosynthetic process"/>
    <property type="evidence" value="ECO:0007669"/>
    <property type="project" value="InterPro"/>
</dbReference>
<dbReference type="GO" id="GO:0006310">
    <property type="term" value="P:DNA recombination"/>
    <property type="evidence" value="ECO:0007669"/>
    <property type="project" value="UniProtKB-UniRule"/>
</dbReference>
<dbReference type="GO" id="GO:0006281">
    <property type="term" value="P:DNA repair"/>
    <property type="evidence" value="ECO:0007669"/>
    <property type="project" value="UniProtKB-UniRule"/>
</dbReference>
<dbReference type="GO" id="GO:0006273">
    <property type="term" value="P:lagging strand elongation"/>
    <property type="evidence" value="ECO:0007669"/>
    <property type="project" value="TreeGrafter"/>
</dbReference>
<dbReference type="CDD" id="cd07901">
    <property type="entry name" value="Adenylation_DNA_ligase_Arch_LigB"/>
    <property type="match status" value="1"/>
</dbReference>
<dbReference type="CDD" id="cd07969">
    <property type="entry name" value="OBF_DNA_ligase_I"/>
    <property type="match status" value="1"/>
</dbReference>
<dbReference type="FunFam" id="1.10.3260.10:FF:000007">
    <property type="entry name" value="DNA ligase"/>
    <property type="match status" value="1"/>
</dbReference>
<dbReference type="FunFam" id="2.40.50.140:FF:000062">
    <property type="entry name" value="DNA ligase"/>
    <property type="match status" value="1"/>
</dbReference>
<dbReference type="FunFam" id="3.30.470.30:FF:000012">
    <property type="entry name" value="Probable DNA ligase"/>
    <property type="match status" value="1"/>
</dbReference>
<dbReference type="Gene3D" id="1.10.3260.10">
    <property type="entry name" value="DNA ligase, ATP-dependent, N-terminal domain"/>
    <property type="match status" value="1"/>
</dbReference>
<dbReference type="Gene3D" id="3.30.470.30">
    <property type="entry name" value="DNA ligase/mRNA capping enzyme"/>
    <property type="match status" value="1"/>
</dbReference>
<dbReference type="Gene3D" id="2.40.50.140">
    <property type="entry name" value="Nucleic acid-binding proteins"/>
    <property type="match status" value="1"/>
</dbReference>
<dbReference type="HAMAP" id="MF_00407">
    <property type="entry name" value="DNA_ligase"/>
    <property type="match status" value="1"/>
</dbReference>
<dbReference type="InterPro" id="IPR050191">
    <property type="entry name" value="ATP-dep_DNA_ligase"/>
</dbReference>
<dbReference type="InterPro" id="IPR022865">
    <property type="entry name" value="DNA_ligae_ATP-dep_bac/arc"/>
</dbReference>
<dbReference type="InterPro" id="IPR000977">
    <property type="entry name" value="DNA_ligase_ATP-dep"/>
</dbReference>
<dbReference type="InterPro" id="IPR012309">
    <property type="entry name" value="DNA_ligase_ATP-dep_C"/>
</dbReference>
<dbReference type="InterPro" id="IPR012310">
    <property type="entry name" value="DNA_ligase_ATP-dep_cent"/>
</dbReference>
<dbReference type="InterPro" id="IPR016059">
    <property type="entry name" value="DNA_ligase_ATP-dep_CS"/>
</dbReference>
<dbReference type="InterPro" id="IPR012308">
    <property type="entry name" value="DNA_ligase_ATP-dep_N"/>
</dbReference>
<dbReference type="InterPro" id="IPR036599">
    <property type="entry name" value="DNA_ligase_N_sf"/>
</dbReference>
<dbReference type="InterPro" id="IPR012340">
    <property type="entry name" value="NA-bd_OB-fold"/>
</dbReference>
<dbReference type="NCBIfam" id="TIGR00574">
    <property type="entry name" value="dnl1"/>
    <property type="match status" value="1"/>
</dbReference>
<dbReference type="PANTHER" id="PTHR45674:SF4">
    <property type="entry name" value="DNA LIGASE 1"/>
    <property type="match status" value="1"/>
</dbReference>
<dbReference type="PANTHER" id="PTHR45674">
    <property type="entry name" value="DNA LIGASE 1/3 FAMILY MEMBER"/>
    <property type="match status" value="1"/>
</dbReference>
<dbReference type="Pfam" id="PF04679">
    <property type="entry name" value="DNA_ligase_A_C"/>
    <property type="match status" value="1"/>
</dbReference>
<dbReference type="Pfam" id="PF01068">
    <property type="entry name" value="DNA_ligase_A_M"/>
    <property type="match status" value="1"/>
</dbReference>
<dbReference type="Pfam" id="PF04675">
    <property type="entry name" value="DNA_ligase_A_N"/>
    <property type="match status" value="1"/>
</dbReference>
<dbReference type="SUPFAM" id="SSF117018">
    <property type="entry name" value="ATP-dependent DNA ligase DNA-binding domain"/>
    <property type="match status" value="1"/>
</dbReference>
<dbReference type="SUPFAM" id="SSF56091">
    <property type="entry name" value="DNA ligase/mRNA capping enzyme, catalytic domain"/>
    <property type="match status" value="1"/>
</dbReference>
<dbReference type="SUPFAM" id="SSF50249">
    <property type="entry name" value="Nucleic acid-binding proteins"/>
    <property type="match status" value="1"/>
</dbReference>
<dbReference type="PROSITE" id="PS00697">
    <property type="entry name" value="DNA_LIGASE_A1"/>
    <property type="match status" value="1"/>
</dbReference>
<dbReference type="PROSITE" id="PS50160">
    <property type="entry name" value="DNA_LIGASE_A3"/>
    <property type="match status" value="1"/>
</dbReference>
<protein>
    <recommendedName>
        <fullName evidence="1">DNA ligase</fullName>
        <ecNumber evidence="1">6.5.1.1</ecNumber>
    </recommendedName>
    <alternativeName>
        <fullName evidence="1">Polydeoxyribonucleotide synthase [ATP]</fullName>
    </alternativeName>
</protein>
<organism>
    <name type="scientific">Pyrobaculum arsenaticum (strain DSM 13514 / JCM 11321 / PZ6)</name>
    <dbReference type="NCBI Taxonomy" id="340102"/>
    <lineage>
        <taxon>Archaea</taxon>
        <taxon>Thermoproteota</taxon>
        <taxon>Thermoprotei</taxon>
        <taxon>Thermoproteales</taxon>
        <taxon>Thermoproteaceae</taxon>
        <taxon>Pyrobaculum</taxon>
    </lineage>
</organism>
<sequence length="584" mass="64746">MQFGELVKALAAVESTTQRSVMVKLLASLFKKALPEEIDKVIYLILGDLRPPWEGLELGVGEKLCLRALAKATGTSQAELESMYKKTGDIGEAARRALASSKRPGLLAFGSQKPLEVSEVYDALIKVARATGEGAQDMKIALLSSLFARSSPEEGKYIARFVVGKLRLGVADMTIIEALADAYGVRKEDLERAYHVYPDLGHLAKLVASGKPLDEVKVTPGVPVLPMLAQRLSSSSEILAKLGGAAICEYKYDGERAQIHISQSGVRIFSRRLEDITHAYPDVVKAVREAVSAREAILEGEIVAVDPDTGEMLPFQELMHRKRKHEVAAAMEMYPTVLYLFDIVYVDGEDLTNEPLIYRRVKLSEIVHESDKVQIAKWQMFDDPDTVDVFFHEAVSVGTEGLICKSPTSEYEMGARGWNWIKYKRDYKSEMIDTVDLVVVGAFYGRGKRAGLYGAFLLAAYDPSSDMFYTVCKVGSGFTDADLKKMYEILQPLKIPHRHPRVSSKMEADVWFVPQVVIEVIGAEITLSPLHTCCLGAVRPGVGLAVRFPRFTGRYRTDKGPEQATTVAEMLELYKRQKKVAQPE</sequence>
<evidence type="ECO:0000255" key="1">
    <source>
        <dbReference type="HAMAP-Rule" id="MF_00407"/>
    </source>
</evidence>
<comment type="function">
    <text evidence="1">DNA ligase that seals nicks in double-stranded DNA during DNA replication, DNA recombination and DNA repair.</text>
</comment>
<comment type="catalytic activity">
    <reaction evidence="1">
        <text>ATP + (deoxyribonucleotide)n-3'-hydroxyl + 5'-phospho-(deoxyribonucleotide)m = (deoxyribonucleotide)n+m + AMP + diphosphate.</text>
        <dbReference type="EC" id="6.5.1.1"/>
    </reaction>
</comment>
<comment type="cofactor">
    <cofactor evidence="1">
        <name>Mg(2+)</name>
        <dbReference type="ChEBI" id="CHEBI:18420"/>
    </cofactor>
</comment>
<comment type="similarity">
    <text evidence="1">Belongs to the ATP-dependent DNA ligase family.</text>
</comment>
<keyword id="KW-0067">ATP-binding</keyword>
<keyword id="KW-0131">Cell cycle</keyword>
<keyword id="KW-0132">Cell division</keyword>
<keyword id="KW-0227">DNA damage</keyword>
<keyword id="KW-0233">DNA recombination</keyword>
<keyword id="KW-0234">DNA repair</keyword>
<keyword id="KW-0235">DNA replication</keyword>
<keyword id="KW-0436">Ligase</keyword>
<keyword id="KW-0460">Magnesium</keyword>
<keyword id="KW-0479">Metal-binding</keyword>
<keyword id="KW-0547">Nucleotide-binding</keyword>
<proteinExistence type="inferred from homology"/>